<keyword id="KW-0002">3D-structure</keyword>
<keyword id="KW-0004">4Fe-4S</keyword>
<keyword id="KW-1003">Cell membrane</keyword>
<keyword id="KW-0408">Iron</keyword>
<keyword id="KW-0411">Iron-sulfur</keyword>
<keyword id="KW-0472">Membrane</keyword>
<keyword id="KW-0479">Metal-binding</keyword>
<keyword id="KW-0560">Oxidoreductase</keyword>
<keyword id="KW-0677">Repeat</keyword>
<keyword id="KW-0732">Signal</keyword>
<sequence>MGEINRRNFLKVSILGAAAAAVASASAVKGMVSPLVADAADIVAPITETSEFPYKVDAKYQRYNSLKNFFEKTFDPEANKTPIKFHYDDVSKITGKKDTGKDLPTLNAERLGIKGRPATHTETSILFHTQHLGAMLTQRHNETGWTGLDEALNAGAWAVEFDYSGFNATGGGPGSVIPLYPINPMTNEIANEPVMVPGLYNWDNIDVESVRQQGQQWKFESKEEASKIVKKATRLLGADLVGIAPYDERWTYSTWGRKIYKPCKMPNGRTKYLPWDLPKMLSGGGVEVFGHAKFEPDWEKYAGFKPKSVIVFVLEEDYEAIRTSPSVISSATVGKSYSNMAEVAYKIAVFLRKLGYYAAPCGNDTGISVPMAVQAGLGEAGRNGLLITQKFGPRHRIAKVYTDLELAPDKPRKFGVREFCRLCKKCADACPAQAISHEKDPKVLQPEDCEVAENPYTEKWHLDSNRCGSFWAYNGSPCSNCVAVCSWNKVETWNHDVARIATQIPLLQDAARKFDEWFGYNGPVNPDERLESGYVQNMVKDFWNNPESIKQ</sequence>
<dbReference type="EC" id="1.21.99.5" evidence="2"/>
<dbReference type="EMBL" id="AJ439608">
    <property type="protein sequence ID" value="CAD28792.1"/>
    <property type="molecule type" value="Genomic_DNA"/>
</dbReference>
<dbReference type="PDB" id="8Q4H">
    <property type="method" value="EM"/>
    <property type="resolution" value="2.83 A"/>
    <property type="chains" value="A/B=49-551"/>
</dbReference>
<dbReference type="PDBsum" id="8Q4H"/>
<dbReference type="EMDB" id="EMD-18148"/>
<dbReference type="SMR" id="Q8GJ31"/>
<dbReference type="BRENDA" id="1.21.99.5">
    <property type="organism ID" value="1880"/>
</dbReference>
<dbReference type="GO" id="GO:0005886">
    <property type="term" value="C:plasma membrane"/>
    <property type="evidence" value="ECO:0007669"/>
    <property type="project" value="UniProtKB-SubCell"/>
</dbReference>
<dbReference type="GO" id="GO:0051539">
    <property type="term" value="F:4 iron, 4 sulfur cluster binding"/>
    <property type="evidence" value="ECO:0007669"/>
    <property type="project" value="UniProtKB-KW"/>
</dbReference>
<dbReference type="GO" id="GO:0046872">
    <property type="term" value="F:metal ion binding"/>
    <property type="evidence" value="ECO:0007669"/>
    <property type="project" value="UniProtKB-KW"/>
</dbReference>
<dbReference type="GO" id="GO:0016491">
    <property type="term" value="F:oxidoreductase activity"/>
    <property type="evidence" value="ECO:0007669"/>
    <property type="project" value="UniProtKB-KW"/>
</dbReference>
<dbReference type="Gene3D" id="3.30.70.20">
    <property type="match status" value="1"/>
</dbReference>
<dbReference type="InterPro" id="IPR017896">
    <property type="entry name" value="4Fe4S_Fe-S-bd"/>
</dbReference>
<dbReference type="InterPro" id="IPR017900">
    <property type="entry name" value="4Fe4S_Fe_S_CS"/>
</dbReference>
<dbReference type="InterPro" id="IPR012832">
    <property type="entry name" value="RDH"/>
</dbReference>
<dbReference type="InterPro" id="IPR006311">
    <property type="entry name" value="TAT_signal"/>
</dbReference>
<dbReference type="InterPro" id="IPR019546">
    <property type="entry name" value="TAT_signal_bac_arc"/>
</dbReference>
<dbReference type="NCBIfam" id="TIGR02486">
    <property type="entry name" value="RDH"/>
    <property type="match status" value="1"/>
</dbReference>
<dbReference type="NCBIfam" id="TIGR01409">
    <property type="entry name" value="TAT_signal_seq"/>
    <property type="match status" value="1"/>
</dbReference>
<dbReference type="PANTHER" id="PTHR42827:SF1">
    <property type="entry name" value="IRON-SULFUR CLUSTER-BINDING PROTEIN"/>
    <property type="match status" value="1"/>
</dbReference>
<dbReference type="PANTHER" id="PTHR42827">
    <property type="entry name" value="IRON-SULFUR CLUSTER-BINDING PROTEIN-RELATED"/>
    <property type="match status" value="1"/>
</dbReference>
<dbReference type="Pfam" id="PF13484">
    <property type="entry name" value="Fer4_16"/>
    <property type="match status" value="1"/>
</dbReference>
<dbReference type="Pfam" id="PF10518">
    <property type="entry name" value="TAT_signal"/>
    <property type="match status" value="1"/>
</dbReference>
<dbReference type="SUPFAM" id="SSF54862">
    <property type="entry name" value="4Fe-4S ferredoxins"/>
    <property type="match status" value="1"/>
</dbReference>
<dbReference type="PROSITE" id="PS00198">
    <property type="entry name" value="4FE4S_FER_1"/>
    <property type="match status" value="1"/>
</dbReference>
<dbReference type="PROSITE" id="PS51379">
    <property type="entry name" value="4FE4S_FER_2"/>
    <property type="match status" value="1"/>
</dbReference>
<dbReference type="PROSITE" id="PS51318">
    <property type="entry name" value="TAT"/>
    <property type="match status" value="1"/>
</dbReference>
<gene>
    <name evidence="6" type="primary">pceA</name>
</gene>
<protein>
    <recommendedName>
        <fullName evidence="6">Tetrachloroethene reductive dehalogenase</fullName>
        <ecNumber evidence="2">1.21.99.5</ecNumber>
    </recommendedName>
</protein>
<feature type="signal peptide" description="Tat-type signal" evidence="3">
    <location>
        <begin position="1"/>
        <end position="39"/>
    </location>
</feature>
<feature type="chain" id="PRO_5004307762" description="Tetrachloroethene reductive dehalogenase" evidence="3">
    <location>
        <begin position="40"/>
        <end position="551"/>
    </location>
</feature>
<feature type="domain" description="4Fe-4S ferredoxin-type 1" evidence="4">
    <location>
        <begin position="411"/>
        <end position="440"/>
    </location>
</feature>
<feature type="domain" description="4Fe-4S ferredoxin-type 2" evidence="7">
    <location>
        <begin position="478"/>
        <end position="496"/>
    </location>
</feature>
<feature type="binding site" evidence="1">
    <location>
        <position position="420"/>
    </location>
    <ligand>
        <name>[4Fe-4S] cluster</name>
        <dbReference type="ChEBI" id="CHEBI:49883"/>
        <label>1</label>
    </ligand>
</feature>
<feature type="binding site" evidence="1">
    <location>
        <position position="423"/>
    </location>
    <ligand>
        <name>[4Fe-4S] cluster</name>
        <dbReference type="ChEBI" id="CHEBI:49883"/>
        <label>1</label>
    </ligand>
</feature>
<feature type="binding site" evidence="1">
    <location>
        <position position="426"/>
    </location>
    <ligand>
        <name>[4Fe-4S] cluster</name>
        <dbReference type="ChEBI" id="CHEBI:49883"/>
        <label>1</label>
    </ligand>
</feature>
<feature type="binding site" evidence="1">
    <location>
        <position position="430"/>
    </location>
    <ligand>
        <name>[4Fe-4S] cluster</name>
        <dbReference type="ChEBI" id="CHEBI:49883"/>
        <label>2</label>
    </ligand>
</feature>
<feature type="binding site" evidence="1">
    <location>
        <position position="467"/>
    </location>
    <ligand>
        <name>[4Fe-4S] cluster</name>
        <dbReference type="ChEBI" id="CHEBI:49883"/>
        <label>2</label>
    </ligand>
</feature>
<feature type="binding site" evidence="1">
    <location>
        <position position="478"/>
    </location>
    <ligand>
        <name>[4Fe-4S] cluster</name>
        <dbReference type="ChEBI" id="CHEBI:49883"/>
        <label>2</label>
    </ligand>
</feature>
<feature type="binding site" evidence="1">
    <location>
        <position position="481"/>
    </location>
    <ligand>
        <name>[4Fe-4S] cluster</name>
        <dbReference type="ChEBI" id="CHEBI:49883"/>
        <label>2</label>
    </ligand>
</feature>
<feature type="binding site" evidence="1">
    <location>
        <position position="485"/>
    </location>
    <ligand>
        <name>[4Fe-4S] cluster</name>
        <dbReference type="ChEBI" id="CHEBI:49883"/>
        <label>1</label>
    </ligand>
</feature>
<feature type="helix" evidence="8">
    <location>
        <begin position="65"/>
        <end position="67"/>
    </location>
</feature>
<feature type="turn" evidence="8">
    <location>
        <begin position="69"/>
        <end position="71"/>
    </location>
</feature>
<feature type="helix" evidence="8">
    <location>
        <begin position="72"/>
        <end position="74"/>
    </location>
</feature>
<feature type="helix" evidence="8">
    <location>
        <begin position="76"/>
        <end position="79"/>
    </location>
</feature>
<feature type="strand" evidence="8">
    <location>
        <begin position="80"/>
        <end position="82"/>
    </location>
</feature>
<feature type="helix" evidence="8">
    <location>
        <begin position="91"/>
        <end position="94"/>
    </location>
</feature>
<feature type="helix" evidence="8">
    <location>
        <begin position="103"/>
        <end position="111"/>
    </location>
</feature>
<feature type="helix" evidence="8">
    <location>
        <begin position="120"/>
        <end position="132"/>
    </location>
</feature>
<feature type="turn" evidence="8">
    <location>
        <begin position="138"/>
        <end position="141"/>
    </location>
</feature>
<feature type="helix" evidence="8">
    <location>
        <begin position="147"/>
        <end position="156"/>
    </location>
</feature>
<feature type="helix" evidence="8">
    <location>
        <begin position="158"/>
        <end position="163"/>
    </location>
</feature>
<feature type="helix" evidence="8">
    <location>
        <begin position="167"/>
        <end position="169"/>
    </location>
</feature>
<feature type="strand" evidence="8">
    <location>
        <begin position="176"/>
        <end position="179"/>
    </location>
</feature>
<feature type="turn" evidence="8">
    <location>
        <begin position="184"/>
        <end position="187"/>
    </location>
</feature>
<feature type="strand" evidence="8">
    <location>
        <begin position="194"/>
        <end position="197"/>
    </location>
</feature>
<feature type="helix" evidence="8">
    <location>
        <begin position="207"/>
        <end position="212"/>
    </location>
</feature>
<feature type="helix" evidence="8">
    <location>
        <begin position="222"/>
        <end position="236"/>
    </location>
</feature>
<feature type="strand" evidence="8">
    <location>
        <begin position="239"/>
        <end position="245"/>
    </location>
</feature>
<feature type="helix" evidence="8">
    <location>
        <begin position="248"/>
        <end position="250"/>
    </location>
</feature>
<feature type="strand" evidence="8">
    <location>
        <begin position="255"/>
        <end position="258"/>
    </location>
</feature>
<feature type="strand" evidence="8">
    <location>
        <begin position="261"/>
        <end position="264"/>
    </location>
</feature>
<feature type="strand" evidence="8">
    <location>
        <begin position="270"/>
        <end position="275"/>
    </location>
</feature>
<feature type="helix" evidence="8">
    <location>
        <begin position="277"/>
        <end position="282"/>
    </location>
</feature>
<feature type="strand" evidence="8">
    <location>
        <begin position="291"/>
        <end position="294"/>
    </location>
</feature>
<feature type="helix" evidence="8">
    <location>
        <begin position="298"/>
        <end position="301"/>
    </location>
</feature>
<feature type="strand" evidence="8">
    <location>
        <begin position="308"/>
        <end position="315"/>
    </location>
</feature>
<feature type="helix" evidence="8">
    <location>
        <begin position="318"/>
        <end position="321"/>
    </location>
</feature>
<feature type="helix" evidence="8">
    <location>
        <begin position="327"/>
        <end position="353"/>
    </location>
</feature>
<feature type="strand" evidence="8">
    <location>
        <begin position="358"/>
        <end position="366"/>
    </location>
</feature>
<feature type="helix" evidence="8">
    <location>
        <begin position="368"/>
        <end position="374"/>
    </location>
</feature>
<feature type="strand" evidence="8">
    <location>
        <begin position="384"/>
        <end position="388"/>
    </location>
</feature>
<feature type="turn" evidence="8">
    <location>
        <begin position="389"/>
        <end position="391"/>
    </location>
</feature>
<feature type="strand" evidence="8">
    <location>
        <begin position="395"/>
        <end position="402"/>
    </location>
</feature>
<feature type="helix" evidence="8">
    <location>
        <begin position="416"/>
        <end position="423"/>
    </location>
</feature>
<feature type="helix" evidence="8">
    <location>
        <begin position="425"/>
        <end position="428"/>
    </location>
</feature>
<feature type="helix" evidence="8">
    <location>
        <begin position="446"/>
        <end position="448"/>
    </location>
</feature>
<feature type="strand" evidence="8">
    <location>
        <begin position="456"/>
        <end position="459"/>
    </location>
</feature>
<feature type="helix" evidence="8">
    <location>
        <begin position="464"/>
        <end position="474"/>
    </location>
</feature>
<feature type="helix" evidence="8">
    <location>
        <begin position="480"/>
        <end position="483"/>
    </location>
</feature>
<feature type="helix" evidence="8">
    <location>
        <begin position="493"/>
        <end position="501"/>
    </location>
</feature>
<feature type="helix" evidence="8">
    <location>
        <begin position="507"/>
        <end position="517"/>
    </location>
</feature>
<feature type="turn" evidence="8">
    <location>
        <begin position="518"/>
        <end position="521"/>
    </location>
</feature>
<feature type="helix" evidence="8">
    <location>
        <begin position="528"/>
        <end position="531"/>
    </location>
</feature>
<feature type="helix" evidence="8">
    <location>
        <begin position="534"/>
        <end position="544"/>
    </location>
</feature>
<comment type="function">
    <text evidence="2">Catalyzes the reductive dechlorination of tetrachloroethene (PCE) to trichloroethene (TCE) and of trichloroethene to cis-1,2-dichloroethene (DCE).</text>
</comment>
<comment type="catalytic activity">
    <reaction evidence="2">
        <text>trichloroethene + chloride + A + H(+) = tetrachloroethene + AH2</text>
        <dbReference type="Rhea" id="RHEA:20353"/>
        <dbReference type="ChEBI" id="CHEBI:13193"/>
        <dbReference type="ChEBI" id="CHEBI:15378"/>
        <dbReference type="ChEBI" id="CHEBI:16602"/>
        <dbReference type="ChEBI" id="CHEBI:17300"/>
        <dbReference type="ChEBI" id="CHEBI:17499"/>
        <dbReference type="ChEBI" id="CHEBI:17996"/>
        <dbReference type="EC" id="1.21.99.5"/>
    </reaction>
    <physiologicalReaction direction="right-to-left" evidence="2">
        <dbReference type="Rhea" id="RHEA:20355"/>
    </physiologicalReaction>
</comment>
<comment type="catalytic activity">
    <reaction evidence="2">
        <text>trichloroethene + AH2 = (Z)-1,2-dichloroethene + chloride + A + H(+)</text>
        <dbReference type="Rhea" id="RHEA:67992"/>
        <dbReference type="ChEBI" id="CHEBI:13193"/>
        <dbReference type="ChEBI" id="CHEBI:15378"/>
        <dbReference type="ChEBI" id="CHEBI:16602"/>
        <dbReference type="ChEBI" id="CHEBI:17499"/>
        <dbReference type="ChEBI" id="CHEBI:17996"/>
        <dbReference type="ChEBI" id="CHEBI:28805"/>
    </reaction>
    <physiologicalReaction direction="left-to-right" evidence="2">
        <dbReference type="Rhea" id="RHEA:67993"/>
    </physiologicalReaction>
</comment>
<comment type="cofactor">
    <cofactor evidence="1">
        <name>[4Fe-4S] cluster</name>
        <dbReference type="ChEBI" id="CHEBI:49883"/>
    </cofactor>
    <text evidence="1">Binds 2 [4Fe-4S] clusters.</text>
</comment>
<comment type="cofactor">
    <cofactor evidence="2">
        <name>corrinoid</name>
        <dbReference type="ChEBI" id="CHEBI:33913"/>
    </cofactor>
</comment>
<comment type="subcellular location">
    <subcellularLocation>
        <location evidence="2">Cell membrane</location>
        <topology evidence="2">Peripheral membrane protein</topology>
    </subcellularLocation>
</comment>
<comment type="induction">
    <text evidence="5">Coexpressed with pceB.</text>
</comment>
<comment type="PTM">
    <text evidence="3">Predicted to be exported by the Tat system. The position of the signal peptide cleavage has not been experimentally proven.</text>
</comment>
<comment type="similarity">
    <text evidence="7">Belongs to the PceA family.</text>
</comment>
<evidence type="ECO:0000250" key="1">
    <source>
        <dbReference type="UniProtKB" id="O68252"/>
    </source>
</evidence>
<evidence type="ECO:0000250" key="2">
    <source>
        <dbReference type="UniProtKB" id="Q848J2"/>
    </source>
</evidence>
<evidence type="ECO:0000255" key="3">
    <source>
        <dbReference type="PROSITE-ProRule" id="PRU00648"/>
    </source>
</evidence>
<evidence type="ECO:0000255" key="4">
    <source>
        <dbReference type="PROSITE-ProRule" id="PRU00711"/>
    </source>
</evidence>
<evidence type="ECO:0000269" key="5">
    <source>
    </source>
</evidence>
<evidence type="ECO:0000303" key="6">
    <source>
    </source>
</evidence>
<evidence type="ECO:0000305" key="7"/>
<evidence type="ECO:0007829" key="8">
    <source>
        <dbReference type="PDB" id="8Q4H"/>
    </source>
</evidence>
<name>PCEA2_DESHA</name>
<organism>
    <name type="scientific">Desulfitobacterium hafniense</name>
    <name type="common">Desulfitobacterium frappieri</name>
    <dbReference type="NCBI Taxonomy" id="49338"/>
    <lineage>
        <taxon>Bacteria</taxon>
        <taxon>Bacillati</taxon>
        <taxon>Bacillota</taxon>
        <taxon>Clostridia</taxon>
        <taxon>Eubacteriales</taxon>
        <taxon>Desulfitobacteriaceae</taxon>
        <taxon>Desulfitobacterium</taxon>
    </lineage>
</organism>
<reference key="1">
    <citation type="journal article" date="2003" name="Appl. Environ. Microbiol.">
        <title>Characterization of the corrinoid iron-sulfur protein tetrachloroethene reductive dehalogenase of Dehalobacter restrictus.</title>
        <authorList>
            <person name="Maillard J."/>
            <person name="Schumacher W."/>
            <person name="Vazquez F."/>
            <person name="Regeard C."/>
            <person name="Hagen W.R."/>
            <person name="Holliger C."/>
        </authorList>
    </citation>
    <scope>NUCLEOTIDE SEQUENCE [GENOMIC DNA]</scope>
    <source>
        <strain>TCE1</strain>
    </source>
</reference>
<reference key="2">
    <citation type="journal article" date="2005" name="Environ. Microbiol.">
        <title>Isolation and characterization of Tn-Dha1, a transposon containing the tetrachloroethene reductive dehalogenase of Desulfitobacterium hafniense strain TCE1.</title>
        <authorList>
            <person name="Maillard J."/>
            <person name="Regeard C."/>
            <person name="Holliger C."/>
        </authorList>
    </citation>
    <scope>NUCLEOTIDE SEQUENCE [GENOMIC DNA]</scope>
    <scope>INDUCTION</scope>
    <source>
        <strain>TCE1</strain>
    </source>
</reference>
<proteinExistence type="evidence at protein level"/>
<accession>Q8GJ31</accession>